<keyword id="KW-0025">Alternative splicing</keyword>
<keyword id="KW-0963">Cytoplasm</keyword>
<keyword id="KW-0539">Nucleus</keyword>
<keyword id="KW-0653">Protein transport</keyword>
<keyword id="KW-1185">Reference proteome</keyword>
<keyword id="KW-0677">Repeat</keyword>
<keyword id="KW-0813">Transport</keyword>
<evidence type="ECO:0000250" key="1"/>
<evidence type="ECO:0000250" key="2">
    <source>
        <dbReference type="UniProtKB" id="Q92973"/>
    </source>
</evidence>
<evidence type="ECO:0000255" key="3">
    <source>
        <dbReference type="PROSITE-ProRule" id="PRU00115"/>
    </source>
</evidence>
<evidence type="ECO:0000256" key="4">
    <source>
        <dbReference type="SAM" id="MobiDB-lite"/>
    </source>
</evidence>
<evidence type="ECO:0000269" key="5">
    <source>
    </source>
</evidence>
<evidence type="ECO:0000303" key="6">
    <source>
    </source>
</evidence>
<evidence type="ECO:0000303" key="7">
    <source>
    </source>
</evidence>
<evidence type="ECO:0000305" key="8"/>
<sequence length="898" mass="102357">MVWDRQTKMEYEWKPDEQGLQQILQLLKESQSPDTTIQRTVQQKLEQLNQYPDFNNYLIFVLTKLKSEDEPTRSLSGLILKNNVKAHFQNFPNGVTDFIKSECLNNIGDSSPLIRATVGILITTIASKGELQNWPDLLPKLCSLLDSEDYNTCEGAFGALQKICEDSAEILDSDVLDRPLNIMIPKFLQFFKHSSPKIRSHAVACVNQFIISRTQALMLHIDSFIENLFALAGDEEAEVRKNVCRALVMLLEVRMDRLLPHMHNIVEYMLQRTQDQDENVALEACEFWLTLAEQPICKDVLVRHLPKLIPVLVNGMKYSDIDIILLKGDVEEDETIPDSEQDIRPRFHRSRTVAQQHEEDGIEEEDDDDDEIDDDDTISDWNLRKCSAAALDVLANVYRDELLPHILPLLKELLFHHEWVVKESGILVLGAIAEGCMQGMIPYLPELIPHLIQCLSDKKALVRSITCWTLSRYAHWVVSQPPDTYLKPLMTELLKRILDSNKRVQEAACSAFATLEEEACTELVPYLAYILDTLVFAFSKYQHKNLLILYDAIGTLADSVGHHLNKPEYIQMLMPPLIQKWNMLKDEDKDLFPLLECLSSVATALQSGFLPYCEPVYQRCVNLVQKTLAQAMLNNAQPEQYEAPDKDFMIVALDLLSGLAEGLGGNIEQLVARSNILTLMYQCMQDKMPEVRQSSFALLGDLTKACFQHVKPCIADFMPILGTNLNPEFISVCNNATWAIGEISIQMGIEMQPYIPMVLHQLVEIINRPNTPKTLLENTAITIGRLGYVCPQEVAPMLQQFIRPWCTSLRNIRDNEEKDSAFRGICTMISVNPSGVIQDFIFFCDAVASWINPKDDLRDMFCKILHGFKNQVGDENWRRFSDQFPLPLKERLAAFYGV</sequence>
<protein>
    <recommendedName>
        <fullName>Transportin-1</fullName>
    </recommendedName>
    <alternativeName>
        <fullName>Importin beta-2</fullName>
    </alternativeName>
    <alternativeName>
        <fullName>Karyopherin beta-2</fullName>
    </alternativeName>
</protein>
<feature type="chain" id="PRO_0000120766" description="Transportin-1">
    <location>
        <begin position="1"/>
        <end position="898"/>
    </location>
</feature>
<feature type="repeat" description="HEAT 1" evidence="2">
    <location>
        <begin position="19"/>
        <end position="46"/>
    </location>
</feature>
<feature type="domain" description="Importin N-terminal" evidence="3">
    <location>
        <begin position="41"/>
        <end position="109"/>
    </location>
</feature>
<feature type="repeat" description="HEAT 2" evidence="2">
    <location>
        <begin position="51"/>
        <end position="89"/>
    </location>
</feature>
<feature type="repeat" description="HEAT 3" evidence="2">
    <location>
        <begin position="98"/>
        <end position="131"/>
    </location>
</feature>
<feature type="repeat" description="HEAT 4" evidence="2">
    <location>
        <begin position="137"/>
        <end position="174"/>
    </location>
</feature>
<feature type="repeat" description="HEAT 5" evidence="2">
    <location>
        <begin position="181"/>
        <end position="211"/>
    </location>
</feature>
<feature type="repeat" description="HEAT 6" evidence="2">
    <location>
        <begin position="224"/>
        <end position="251"/>
    </location>
</feature>
<feature type="repeat" description="HEAT 7" evidence="2">
    <location>
        <begin position="263"/>
        <end position="290"/>
    </location>
</feature>
<feature type="repeat" description="HEAT 8" evidence="2">
    <location>
        <begin position="306"/>
        <end position="397"/>
    </location>
</feature>
<feature type="repeat" description="HEAT 9" evidence="2">
    <location>
        <begin position="405"/>
        <end position="433"/>
    </location>
</feature>
<feature type="repeat" description="HEAT 10" evidence="2">
    <location>
        <begin position="445"/>
        <end position="472"/>
    </location>
</feature>
<feature type="repeat" description="HEAT 11" evidence="2">
    <location>
        <begin position="486"/>
        <end position="519"/>
    </location>
</feature>
<feature type="repeat" description="HEAT 12" evidence="2">
    <location>
        <begin position="527"/>
        <end position="560"/>
    </location>
</feature>
<feature type="repeat" description="HEAT 13" evidence="2">
    <location>
        <begin position="568"/>
        <end position="606"/>
    </location>
</feature>
<feature type="repeat" description="HEAT 14" evidence="2">
    <location>
        <begin position="614"/>
        <end position="665"/>
    </location>
</feature>
<feature type="repeat" description="HEAT 15" evidence="2">
    <location>
        <begin position="676"/>
        <end position="707"/>
    </location>
</feature>
<feature type="repeat" description="HEAT 16" evidence="2">
    <location>
        <begin position="715"/>
        <end position="748"/>
    </location>
</feature>
<feature type="repeat" description="HEAT 17" evidence="2">
    <location>
        <begin position="756"/>
        <end position="791"/>
    </location>
</feature>
<feature type="repeat" description="HEAT 18" evidence="2">
    <location>
        <begin position="799"/>
        <end position="832"/>
    </location>
</feature>
<feature type="repeat" description="HEAT 19" evidence="2">
    <location>
        <begin position="841"/>
        <end position="872"/>
    </location>
</feature>
<feature type="repeat" description="HEAT 20" evidence="2">
    <location>
        <begin position="875"/>
        <end position="895"/>
    </location>
</feature>
<feature type="region of interest" description="Disordered" evidence="4">
    <location>
        <begin position="347"/>
        <end position="374"/>
    </location>
</feature>
<feature type="compositionally biased region" description="Acidic residues" evidence="4">
    <location>
        <begin position="360"/>
        <end position="374"/>
    </location>
</feature>
<feature type="site" description="Important for interaction with cargo nuclear localization signals" evidence="2">
    <location>
        <position position="468"/>
    </location>
</feature>
<feature type="site" description="Important for interaction with cargo nuclear localization signals" evidence="2">
    <location>
        <position position="738"/>
    </location>
</feature>
<feature type="splice variant" id="VSP_038030" description="In isoform 2." evidence="6 7">
    <original>MVWDRQTKM</original>
    <variation>M</variation>
    <location>
        <begin position="1"/>
        <end position="9"/>
    </location>
</feature>
<feature type="sequence conflict" description="In Ref. 1; BAC26696." evidence="8" ref="1">
    <original>A</original>
    <variation>S</variation>
    <location>
        <position position="389"/>
    </location>
</feature>
<proteinExistence type="evidence at protein level"/>
<gene>
    <name type="primary">Tnpo1</name>
    <name type="synonym">Kpnb2</name>
</gene>
<accession>Q8BFY9</accession>
<accession>Q8C0S3</accession>
<accession>Q8K2E7</accession>
<name>TNPO1_MOUSE</name>
<dbReference type="EMBL" id="AK029953">
    <property type="protein sequence ID" value="BAC26696.1"/>
    <property type="status" value="ALT_INIT"/>
    <property type="molecule type" value="mRNA"/>
</dbReference>
<dbReference type="EMBL" id="AK030580">
    <property type="protein sequence ID" value="BAC27029.1"/>
    <property type="status" value="ALT_INIT"/>
    <property type="molecule type" value="mRNA"/>
</dbReference>
<dbReference type="EMBL" id="AK045132">
    <property type="protein sequence ID" value="BAC32236.1"/>
    <property type="molecule type" value="mRNA"/>
</dbReference>
<dbReference type="EMBL" id="BC031571">
    <property type="protein sequence ID" value="AAH31571.1"/>
    <property type="molecule type" value="mRNA"/>
</dbReference>
<dbReference type="EMBL" id="BC055372">
    <property type="protein sequence ID" value="AAH55372.1"/>
    <property type="molecule type" value="mRNA"/>
</dbReference>
<dbReference type="CCDS" id="CCDS26717.2">
    <molecule id="Q8BFY9-1"/>
</dbReference>
<dbReference type="CCDS" id="CCDS36760.1">
    <molecule id="Q8BFY9-2"/>
</dbReference>
<dbReference type="RefSeq" id="NP_001041732.1">
    <molecule id="Q8BFY9-2"/>
    <property type="nucleotide sequence ID" value="NM_001048267.2"/>
</dbReference>
<dbReference type="RefSeq" id="NP_001413342.1">
    <molecule id="Q8BFY9-2"/>
    <property type="nucleotide sequence ID" value="NM_001426413.1"/>
</dbReference>
<dbReference type="RefSeq" id="NP_001413343.1">
    <molecule id="Q8BFY9-2"/>
    <property type="nucleotide sequence ID" value="NM_001426414.1"/>
</dbReference>
<dbReference type="RefSeq" id="NP_848831.2">
    <molecule id="Q8BFY9-1"/>
    <property type="nucleotide sequence ID" value="NM_178716.4"/>
</dbReference>
<dbReference type="RefSeq" id="XP_006517699.1">
    <property type="nucleotide sequence ID" value="XM_006517636.3"/>
</dbReference>
<dbReference type="RefSeq" id="XP_006517700.1">
    <property type="nucleotide sequence ID" value="XM_006517637.3"/>
</dbReference>
<dbReference type="SMR" id="Q8BFY9"/>
<dbReference type="BioGRID" id="232018">
    <property type="interactions" value="71"/>
</dbReference>
<dbReference type="FunCoup" id="Q8BFY9">
    <property type="interactions" value="6277"/>
</dbReference>
<dbReference type="IntAct" id="Q8BFY9">
    <property type="interactions" value="53"/>
</dbReference>
<dbReference type="MINT" id="Q8BFY9"/>
<dbReference type="STRING" id="10090.ENSMUSP00000105028"/>
<dbReference type="iPTMnet" id="Q8BFY9"/>
<dbReference type="PhosphoSitePlus" id="Q8BFY9"/>
<dbReference type="SwissPalm" id="Q8BFY9"/>
<dbReference type="jPOST" id="Q8BFY9"/>
<dbReference type="PaxDb" id="10090-ENSMUSP00000105028"/>
<dbReference type="PeptideAtlas" id="Q8BFY9"/>
<dbReference type="ProteomicsDB" id="259605">
    <molecule id="Q8BFY9-1"/>
</dbReference>
<dbReference type="ProteomicsDB" id="259606">
    <molecule id="Q8BFY9-2"/>
</dbReference>
<dbReference type="Pumba" id="Q8BFY9"/>
<dbReference type="Antibodypedia" id="4275">
    <property type="antibodies" value="299 antibodies from 30 providers"/>
</dbReference>
<dbReference type="DNASU" id="238799"/>
<dbReference type="Ensembl" id="ENSMUST00000109399.9">
    <molecule id="Q8BFY9-2"/>
    <property type="protein sequence ID" value="ENSMUSP00000105026.3"/>
    <property type="gene ID" value="ENSMUSG00000009470.18"/>
</dbReference>
<dbReference type="Ensembl" id="ENSMUST00000109401.8">
    <molecule id="Q8BFY9-1"/>
    <property type="protein sequence ID" value="ENSMUSP00000105028.2"/>
    <property type="gene ID" value="ENSMUSG00000009470.18"/>
</dbReference>
<dbReference type="GeneID" id="238799"/>
<dbReference type="KEGG" id="mmu:238799"/>
<dbReference type="UCSC" id="uc007rpd.1">
    <molecule id="Q8BFY9-1"/>
    <property type="organism name" value="mouse"/>
</dbReference>
<dbReference type="AGR" id="MGI:2681523"/>
<dbReference type="CTD" id="3842"/>
<dbReference type="MGI" id="MGI:2681523">
    <property type="gene designation" value="Tnpo1"/>
</dbReference>
<dbReference type="VEuPathDB" id="HostDB:ENSMUSG00000009470"/>
<dbReference type="eggNOG" id="KOG2023">
    <property type="taxonomic scope" value="Eukaryota"/>
</dbReference>
<dbReference type="GeneTree" id="ENSGT00940000155389"/>
<dbReference type="InParanoid" id="Q8BFY9"/>
<dbReference type="OrthoDB" id="951172at2759"/>
<dbReference type="PhylomeDB" id="Q8BFY9"/>
<dbReference type="TreeFam" id="TF300825"/>
<dbReference type="Reactome" id="R-MMU-450513">
    <property type="pathway name" value="Tristetraprolin (TTP, ZFP36) binds and destabilizes mRNA"/>
</dbReference>
<dbReference type="Reactome" id="R-MMU-5620924">
    <property type="pathway name" value="Intraflagellar transport"/>
</dbReference>
<dbReference type="BioGRID-ORCS" id="238799">
    <property type="hits" value="28 hits in 75 CRISPR screens"/>
</dbReference>
<dbReference type="CD-CODE" id="DE1E139C">
    <property type="entry name" value="Chromatoid body"/>
</dbReference>
<dbReference type="ChiTaRS" id="Tnpo1">
    <property type="organism name" value="mouse"/>
</dbReference>
<dbReference type="PRO" id="PR:Q8BFY9"/>
<dbReference type="Proteomes" id="UP000000589">
    <property type="component" value="Chromosome 13"/>
</dbReference>
<dbReference type="RNAct" id="Q8BFY9">
    <property type="molecule type" value="protein"/>
</dbReference>
<dbReference type="Bgee" id="ENSMUSG00000009470">
    <property type="expression patterns" value="Expressed in undifferentiated genital tubercle and 259 other cell types or tissues"/>
</dbReference>
<dbReference type="ExpressionAtlas" id="Q8BFY9">
    <property type="expression patterns" value="baseline and differential"/>
</dbReference>
<dbReference type="GO" id="GO:0005737">
    <property type="term" value="C:cytoplasm"/>
    <property type="evidence" value="ECO:0007669"/>
    <property type="project" value="UniProtKB-SubCell"/>
</dbReference>
<dbReference type="GO" id="GO:0005730">
    <property type="term" value="C:nucleolus"/>
    <property type="evidence" value="ECO:0007669"/>
    <property type="project" value="Ensembl"/>
</dbReference>
<dbReference type="GO" id="GO:0005654">
    <property type="term" value="C:nucleoplasm"/>
    <property type="evidence" value="ECO:0007669"/>
    <property type="project" value="Ensembl"/>
</dbReference>
<dbReference type="GO" id="GO:0031267">
    <property type="term" value="F:small GTPase binding"/>
    <property type="evidence" value="ECO:0007669"/>
    <property type="project" value="InterPro"/>
</dbReference>
<dbReference type="GO" id="GO:0006606">
    <property type="term" value="P:protein import into nucleus"/>
    <property type="evidence" value="ECO:0007669"/>
    <property type="project" value="Ensembl"/>
</dbReference>
<dbReference type="FunFam" id="1.25.10.10:FF:000028">
    <property type="entry name" value="Transportin-1 isoform 1"/>
    <property type="match status" value="1"/>
</dbReference>
<dbReference type="Gene3D" id="1.25.10.10">
    <property type="entry name" value="Leucine-rich Repeat Variant"/>
    <property type="match status" value="2"/>
</dbReference>
<dbReference type="InterPro" id="IPR011989">
    <property type="entry name" value="ARM-like"/>
</dbReference>
<dbReference type="InterPro" id="IPR016024">
    <property type="entry name" value="ARM-type_fold"/>
</dbReference>
<dbReference type="InterPro" id="IPR001494">
    <property type="entry name" value="Importin-beta_N"/>
</dbReference>
<dbReference type="InterPro" id="IPR040122">
    <property type="entry name" value="Importin_beta"/>
</dbReference>
<dbReference type="PANTHER" id="PTHR10527">
    <property type="entry name" value="IMPORTIN BETA"/>
    <property type="match status" value="1"/>
</dbReference>
<dbReference type="Pfam" id="PF13513">
    <property type="entry name" value="HEAT_EZ"/>
    <property type="match status" value="1"/>
</dbReference>
<dbReference type="Pfam" id="PF03810">
    <property type="entry name" value="IBN_N"/>
    <property type="match status" value="1"/>
</dbReference>
<dbReference type="SMART" id="SM00913">
    <property type="entry name" value="IBN_N"/>
    <property type="match status" value="1"/>
</dbReference>
<dbReference type="SUPFAM" id="SSF48371">
    <property type="entry name" value="ARM repeat"/>
    <property type="match status" value="1"/>
</dbReference>
<dbReference type="PROSITE" id="PS50166">
    <property type="entry name" value="IMPORTIN_B_NT"/>
    <property type="match status" value="1"/>
</dbReference>
<reference key="1">
    <citation type="journal article" date="2005" name="Science">
        <title>The transcriptional landscape of the mammalian genome.</title>
        <authorList>
            <person name="Carninci P."/>
            <person name="Kasukawa T."/>
            <person name="Katayama S."/>
            <person name="Gough J."/>
            <person name="Frith M.C."/>
            <person name="Maeda N."/>
            <person name="Oyama R."/>
            <person name="Ravasi T."/>
            <person name="Lenhard B."/>
            <person name="Wells C."/>
            <person name="Kodzius R."/>
            <person name="Shimokawa K."/>
            <person name="Bajic V.B."/>
            <person name="Brenner S.E."/>
            <person name="Batalov S."/>
            <person name="Forrest A.R."/>
            <person name="Zavolan M."/>
            <person name="Davis M.J."/>
            <person name="Wilming L.G."/>
            <person name="Aidinis V."/>
            <person name="Allen J.E."/>
            <person name="Ambesi-Impiombato A."/>
            <person name="Apweiler R."/>
            <person name="Aturaliya R.N."/>
            <person name="Bailey T.L."/>
            <person name="Bansal M."/>
            <person name="Baxter L."/>
            <person name="Beisel K.W."/>
            <person name="Bersano T."/>
            <person name="Bono H."/>
            <person name="Chalk A.M."/>
            <person name="Chiu K.P."/>
            <person name="Choudhary V."/>
            <person name="Christoffels A."/>
            <person name="Clutterbuck D.R."/>
            <person name="Crowe M.L."/>
            <person name="Dalla E."/>
            <person name="Dalrymple B.P."/>
            <person name="de Bono B."/>
            <person name="Della Gatta G."/>
            <person name="di Bernardo D."/>
            <person name="Down T."/>
            <person name="Engstrom P."/>
            <person name="Fagiolini M."/>
            <person name="Faulkner G."/>
            <person name="Fletcher C.F."/>
            <person name="Fukushima T."/>
            <person name="Furuno M."/>
            <person name="Futaki S."/>
            <person name="Gariboldi M."/>
            <person name="Georgii-Hemming P."/>
            <person name="Gingeras T.R."/>
            <person name="Gojobori T."/>
            <person name="Green R.E."/>
            <person name="Gustincich S."/>
            <person name="Harbers M."/>
            <person name="Hayashi Y."/>
            <person name="Hensch T.K."/>
            <person name="Hirokawa N."/>
            <person name="Hill D."/>
            <person name="Huminiecki L."/>
            <person name="Iacono M."/>
            <person name="Ikeo K."/>
            <person name="Iwama A."/>
            <person name="Ishikawa T."/>
            <person name="Jakt M."/>
            <person name="Kanapin A."/>
            <person name="Katoh M."/>
            <person name="Kawasawa Y."/>
            <person name="Kelso J."/>
            <person name="Kitamura H."/>
            <person name="Kitano H."/>
            <person name="Kollias G."/>
            <person name="Krishnan S.P."/>
            <person name="Kruger A."/>
            <person name="Kummerfeld S.K."/>
            <person name="Kurochkin I.V."/>
            <person name="Lareau L.F."/>
            <person name="Lazarevic D."/>
            <person name="Lipovich L."/>
            <person name="Liu J."/>
            <person name="Liuni S."/>
            <person name="McWilliam S."/>
            <person name="Madan Babu M."/>
            <person name="Madera M."/>
            <person name="Marchionni L."/>
            <person name="Matsuda H."/>
            <person name="Matsuzawa S."/>
            <person name="Miki H."/>
            <person name="Mignone F."/>
            <person name="Miyake S."/>
            <person name="Morris K."/>
            <person name="Mottagui-Tabar S."/>
            <person name="Mulder N."/>
            <person name="Nakano N."/>
            <person name="Nakauchi H."/>
            <person name="Ng P."/>
            <person name="Nilsson R."/>
            <person name="Nishiguchi S."/>
            <person name="Nishikawa S."/>
            <person name="Nori F."/>
            <person name="Ohara O."/>
            <person name="Okazaki Y."/>
            <person name="Orlando V."/>
            <person name="Pang K.C."/>
            <person name="Pavan W.J."/>
            <person name="Pavesi G."/>
            <person name="Pesole G."/>
            <person name="Petrovsky N."/>
            <person name="Piazza S."/>
            <person name="Reed J."/>
            <person name="Reid J.F."/>
            <person name="Ring B.Z."/>
            <person name="Ringwald M."/>
            <person name="Rost B."/>
            <person name="Ruan Y."/>
            <person name="Salzberg S.L."/>
            <person name="Sandelin A."/>
            <person name="Schneider C."/>
            <person name="Schoenbach C."/>
            <person name="Sekiguchi K."/>
            <person name="Semple C.A."/>
            <person name="Seno S."/>
            <person name="Sessa L."/>
            <person name="Sheng Y."/>
            <person name="Shibata Y."/>
            <person name="Shimada H."/>
            <person name="Shimada K."/>
            <person name="Silva D."/>
            <person name="Sinclair B."/>
            <person name="Sperling S."/>
            <person name="Stupka E."/>
            <person name="Sugiura K."/>
            <person name="Sultana R."/>
            <person name="Takenaka Y."/>
            <person name="Taki K."/>
            <person name="Tammoja K."/>
            <person name="Tan S.L."/>
            <person name="Tang S."/>
            <person name="Taylor M.S."/>
            <person name="Tegner J."/>
            <person name="Teichmann S.A."/>
            <person name="Ueda H.R."/>
            <person name="van Nimwegen E."/>
            <person name="Verardo R."/>
            <person name="Wei C.L."/>
            <person name="Yagi K."/>
            <person name="Yamanishi H."/>
            <person name="Zabarovsky E."/>
            <person name="Zhu S."/>
            <person name="Zimmer A."/>
            <person name="Hide W."/>
            <person name="Bult C."/>
            <person name="Grimmond S.M."/>
            <person name="Teasdale R.D."/>
            <person name="Liu E.T."/>
            <person name="Brusic V."/>
            <person name="Quackenbush J."/>
            <person name="Wahlestedt C."/>
            <person name="Mattick J.S."/>
            <person name="Hume D.A."/>
            <person name="Kai C."/>
            <person name="Sasaki D."/>
            <person name="Tomaru Y."/>
            <person name="Fukuda S."/>
            <person name="Kanamori-Katayama M."/>
            <person name="Suzuki M."/>
            <person name="Aoki J."/>
            <person name="Arakawa T."/>
            <person name="Iida J."/>
            <person name="Imamura K."/>
            <person name="Itoh M."/>
            <person name="Kato T."/>
            <person name="Kawaji H."/>
            <person name="Kawagashira N."/>
            <person name="Kawashima T."/>
            <person name="Kojima M."/>
            <person name="Kondo S."/>
            <person name="Konno H."/>
            <person name="Nakano K."/>
            <person name="Ninomiya N."/>
            <person name="Nishio T."/>
            <person name="Okada M."/>
            <person name="Plessy C."/>
            <person name="Shibata K."/>
            <person name="Shiraki T."/>
            <person name="Suzuki S."/>
            <person name="Tagami M."/>
            <person name="Waki K."/>
            <person name="Watahiki A."/>
            <person name="Okamura-Oho Y."/>
            <person name="Suzuki H."/>
            <person name="Kawai J."/>
            <person name="Hayashizaki Y."/>
        </authorList>
    </citation>
    <scope>NUCLEOTIDE SEQUENCE [LARGE SCALE MRNA] (ISOFORMS 1 AND 2)</scope>
    <source>
        <strain>C57BL/6J</strain>
        <tissue>Pituitary</tissue>
        <tissue>Testis</tissue>
    </source>
</reference>
<reference key="2">
    <citation type="journal article" date="2004" name="Genome Res.">
        <title>The status, quality, and expansion of the NIH full-length cDNA project: the Mammalian Gene Collection (MGC).</title>
        <authorList>
            <consortium name="The MGC Project Team"/>
        </authorList>
    </citation>
    <scope>NUCLEOTIDE SEQUENCE [LARGE SCALE MRNA] (ISOFORM 2)</scope>
    <source>
        <tissue>Mammary tumor</tissue>
        <tissue>Mesenchymal cell</tissue>
    </source>
</reference>
<reference key="3">
    <citation type="journal article" date="2001" name="EMBO Rep.">
        <title>Multiple pathways contribute to nuclear import of core histones.</title>
        <authorList>
            <person name="Muehlhaeusser P."/>
            <person name="Mueller E.-C."/>
            <person name="Otto A."/>
            <person name="Kutay U."/>
        </authorList>
    </citation>
    <scope>FUNCTION</scope>
    <scope>INTERACTION WITH HISTONES H2B; H2A; H3 AND H4</scope>
</reference>
<reference key="4">
    <citation type="journal article" date="2010" name="Cell">
        <title>A tissue-specific atlas of mouse protein phosphorylation and expression.</title>
        <authorList>
            <person name="Huttlin E.L."/>
            <person name="Jedrychowski M.P."/>
            <person name="Elias J.E."/>
            <person name="Goswami T."/>
            <person name="Rad R."/>
            <person name="Beausoleil S.A."/>
            <person name="Villen J."/>
            <person name="Haas W."/>
            <person name="Sowa M.E."/>
            <person name="Gygi S.P."/>
        </authorList>
    </citation>
    <scope>IDENTIFICATION BY MASS SPECTROMETRY [LARGE SCALE ANALYSIS]</scope>
    <source>
        <tissue>Brain</tissue>
        <tissue>Brown adipose tissue</tissue>
        <tissue>Heart</tissue>
        <tissue>Kidney</tissue>
        <tissue>Liver</tissue>
        <tissue>Lung</tissue>
        <tissue>Pancreas</tissue>
        <tissue>Spleen</tissue>
        <tissue>Testis</tissue>
    </source>
</reference>
<organism>
    <name type="scientific">Mus musculus</name>
    <name type="common">Mouse</name>
    <dbReference type="NCBI Taxonomy" id="10090"/>
    <lineage>
        <taxon>Eukaryota</taxon>
        <taxon>Metazoa</taxon>
        <taxon>Chordata</taxon>
        <taxon>Craniata</taxon>
        <taxon>Vertebrata</taxon>
        <taxon>Euteleostomi</taxon>
        <taxon>Mammalia</taxon>
        <taxon>Eutheria</taxon>
        <taxon>Euarchontoglires</taxon>
        <taxon>Glires</taxon>
        <taxon>Rodentia</taxon>
        <taxon>Myomorpha</taxon>
        <taxon>Muroidea</taxon>
        <taxon>Muridae</taxon>
        <taxon>Murinae</taxon>
        <taxon>Mus</taxon>
        <taxon>Mus</taxon>
    </lineage>
</organism>
<comment type="function">
    <text evidence="2 5">Functions in nuclear protein import as nuclear transport receptor. Serves as receptor for nuclear localization signals (NLS) in cargo substrates (PubMed:11493596). May mediate docking of the importin/substrate complex to the nuclear pore complex (NPC) through binding to nucleoporin and the complex is subsequently translocated through the pore by an energy requiring, Ran-dependent mechanism. At the nucleoplasmic side of the NPC, Ran binds to the importin, the importin/substrate complex dissociates and importin is re-exported from the nucleus to the cytoplasm where GTP hydrolysis releases Ran. The directionality of nuclear import is thought to be conferred by an asymmetric distribution of the GTP- and GDP-bound forms of Ran between the cytoplasm and nucleus (By similarity). Involved in nuclear import of M9-containing proteins. In vitro, binds directly to the M9 region of the heterogeneous nuclear ribonucleoproteins (hnRNP), A1 and A2 and mediates their nuclear import. Involved in hnRNP A1/A2 nuclear export. Mediates the nuclear import of ribosomal proteins RPL23A, RPS7 and RPL5 (By similarity). In vitro, mediates nuclear import of SRP19 (By similarity). Mediates the import of histones H2A, H2B, H3 and H4 (PubMed:11493596). Mediates nuclear import of ADAR/ADAR1 in a RanGTP-dependent manner (By similarity). Main mediator of PR-DUB complex component BAP1 nuclear import; acts redundantly with the karyopherins KPNA1 and KPNA2 (By similarity).</text>
</comment>
<comment type="subunit">
    <text evidence="2 5">Identified in a complex that contains TNPO1, RAN and RANBP1 (By similarity). Binds HNRPA1, HNRPA2, HNRNPDL, RPS7, RPL5 and RAN. Interacts with H2A, H2B, H3 and H4 histones (PubMed:11493596). Interacts with isoform 1 and isoform 5 of ADAR/ADAR1 (via DRBM 3 domain). Interacts with SNAI1 (via zinc fingers); the interaction mediates SNAI1 nuclear import. Interacts with SNAI2 (via zinc fingers) (By similarity). Interacts with RPL23A (via BIB domain) and SRP19; this interaction is involved in RPL23A and SRP19 import into the nucleus (By similarity). Interacts (via HEAT repeats 8-12) with BAP1 (via non-classical PY-NLS); this interaction is direct, is involved in BAP1 nuclear import and disrupts BAP1 homodimerization (By similarity).</text>
</comment>
<comment type="subcellular location">
    <subcellularLocation>
        <location evidence="1">Cytoplasm</location>
    </subcellularLocation>
    <subcellularLocation>
        <location evidence="1">Nucleus</location>
    </subcellularLocation>
</comment>
<comment type="alternative products">
    <event type="alternative splicing"/>
    <isoform>
        <id>Q8BFY9-1</id>
        <name>1</name>
        <sequence type="displayed"/>
    </isoform>
    <isoform>
        <id>Q8BFY9-2</id>
        <name>2</name>
        <sequence type="described" ref="VSP_038030"/>
    </isoform>
</comment>
<comment type="similarity">
    <text evidence="8">Belongs to the importin beta family. Importin beta-2 subfamily.</text>
</comment>
<comment type="sequence caution" evidence="8">
    <conflict type="erroneous initiation">
        <sequence resource="EMBL-CDS" id="BAC26696"/>
    </conflict>
</comment>
<comment type="sequence caution" evidence="8">
    <conflict type="erroneous initiation">
        <sequence resource="EMBL-CDS" id="BAC27029"/>
    </conflict>
</comment>